<feature type="chain" id="PRO_0000195314" description="Glucose-1-phosphate adenylyltransferase">
    <location>
        <begin position="1"/>
        <end position="439"/>
    </location>
</feature>
<feature type="binding site" evidence="1">
    <location>
        <position position="116"/>
    </location>
    <ligand>
        <name>alpha-D-glucose 1-phosphate</name>
        <dbReference type="ChEBI" id="CHEBI:58601"/>
    </ligand>
</feature>
<feature type="binding site" evidence="1">
    <location>
        <position position="182"/>
    </location>
    <ligand>
        <name>alpha-D-glucose 1-phosphate</name>
        <dbReference type="ChEBI" id="CHEBI:58601"/>
    </ligand>
</feature>
<feature type="binding site" evidence="1">
    <location>
        <begin position="197"/>
        <end position="198"/>
    </location>
    <ligand>
        <name>alpha-D-glucose 1-phosphate</name>
        <dbReference type="ChEBI" id="CHEBI:58601"/>
    </ligand>
</feature>
<feature type="binding site" evidence="1">
    <location>
        <position position="215"/>
    </location>
    <ligand>
        <name>alpha-D-glucose 1-phosphate</name>
        <dbReference type="ChEBI" id="CHEBI:58601"/>
    </ligand>
</feature>
<evidence type="ECO:0000255" key="1">
    <source>
        <dbReference type="HAMAP-Rule" id="MF_00624"/>
    </source>
</evidence>
<protein>
    <recommendedName>
        <fullName evidence="1">Glucose-1-phosphate adenylyltransferase</fullName>
        <ecNumber evidence="1">2.7.7.27</ecNumber>
    </recommendedName>
    <alternativeName>
        <fullName evidence="1">ADP-glucose pyrophosphorylase</fullName>
        <shortName evidence="1">ADPGlc PPase</shortName>
    </alternativeName>
    <alternativeName>
        <fullName evidence="1">ADP-glucose synthase</fullName>
    </alternativeName>
</protein>
<comment type="function">
    <text evidence="1">Involved in the biosynthesis of ADP-glucose, a building block required for the elongation reactions to produce glycogen. Catalyzes the reaction between ATP and alpha-D-glucose 1-phosphate (G1P) to produce pyrophosphate and ADP-Glc.</text>
</comment>
<comment type="catalytic activity">
    <reaction evidence="1">
        <text>alpha-D-glucose 1-phosphate + ATP + H(+) = ADP-alpha-D-glucose + diphosphate</text>
        <dbReference type="Rhea" id="RHEA:12120"/>
        <dbReference type="ChEBI" id="CHEBI:15378"/>
        <dbReference type="ChEBI" id="CHEBI:30616"/>
        <dbReference type="ChEBI" id="CHEBI:33019"/>
        <dbReference type="ChEBI" id="CHEBI:57498"/>
        <dbReference type="ChEBI" id="CHEBI:58601"/>
        <dbReference type="EC" id="2.7.7.27"/>
    </reaction>
</comment>
<comment type="pathway">
    <text evidence="1">Glycan biosynthesis; glycogen biosynthesis.</text>
</comment>
<comment type="subunit">
    <text evidence="1">Homotetramer.</text>
</comment>
<comment type="similarity">
    <text evidence="1">Belongs to the bacterial/plant glucose-1-phosphate adenylyltransferase family.</text>
</comment>
<proteinExistence type="inferred from homology"/>
<organism>
    <name type="scientific">Pasteurella multocida (strain Pm70)</name>
    <dbReference type="NCBI Taxonomy" id="272843"/>
    <lineage>
        <taxon>Bacteria</taxon>
        <taxon>Pseudomonadati</taxon>
        <taxon>Pseudomonadota</taxon>
        <taxon>Gammaproteobacteria</taxon>
        <taxon>Pasteurellales</taxon>
        <taxon>Pasteurellaceae</taxon>
        <taxon>Pasteurella</taxon>
    </lineage>
</organism>
<reference key="1">
    <citation type="journal article" date="2001" name="Proc. Natl. Acad. Sci. U.S.A.">
        <title>Complete genomic sequence of Pasteurella multocida Pm70.</title>
        <authorList>
            <person name="May B.J."/>
            <person name="Zhang Q."/>
            <person name="Li L.L."/>
            <person name="Paustian M.L."/>
            <person name="Whittam T.S."/>
            <person name="Kapur V."/>
        </authorList>
    </citation>
    <scope>NUCLEOTIDE SEQUENCE [LARGE SCALE GENOMIC DNA]</scope>
    <source>
        <strain>Pm70</strain>
    </source>
</reference>
<accession>Q9CN92</accession>
<name>GLGC_PASMU</name>
<sequence>MEVIMNSSIVKLPNKYELVKDTLVLILAGGRGSRLYELTDKRAKPALYFGGNRRIIDFALSNCLNSGLNRIGVVTQYAAHSLLRHLQNGWSFLPAERGEFIDMLPARQQIDDSTWYRGTADAVYQNMAIIRDHYCPKYILILAGDHIYKQDYSQMLLDHIHSGAKCTVGCIEVEREKATEFGVMAVNENLKVKSFVEKPKDPPAMVGKPNTSLASMGIYVFDADYLYDVLEREVSSPYTSHDFGKDILPKALEEGVLYAHPFSRSCMGRNTEGEIYWRDVGTLDSFWQSNIDLVCENPQLDIYDQSWPIRGNPVQTYPSKFFYKKENARPVDNSLISGGCVITDASISYSVLFDRIKINEGSQIDHCVVLPQVTIGKNCKLKRCIIDRHSVIPDGMEIGVDLELDRQRFRVSSGGVVLVTPSMLKKLNGEEVASEAHLD</sequence>
<keyword id="KW-0067">ATP-binding</keyword>
<keyword id="KW-0119">Carbohydrate metabolism</keyword>
<keyword id="KW-0320">Glycogen biosynthesis</keyword>
<keyword id="KW-0321">Glycogen metabolism</keyword>
<keyword id="KW-0547">Nucleotide-binding</keyword>
<keyword id="KW-0548">Nucleotidyltransferase</keyword>
<keyword id="KW-1185">Reference proteome</keyword>
<keyword id="KW-0808">Transferase</keyword>
<gene>
    <name evidence="1" type="primary">glgC</name>
    <name type="ordered locus">PM0543</name>
</gene>
<dbReference type="EC" id="2.7.7.27" evidence="1"/>
<dbReference type="EMBL" id="AE004439">
    <property type="protein sequence ID" value="AAK02627.1"/>
    <property type="molecule type" value="Genomic_DNA"/>
</dbReference>
<dbReference type="SMR" id="Q9CN92"/>
<dbReference type="STRING" id="272843.PM0543"/>
<dbReference type="EnsemblBacteria" id="AAK02627">
    <property type="protein sequence ID" value="AAK02627"/>
    <property type="gene ID" value="PM0543"/>
</dbReference>
<dbReference type="KEGG" id="pmu:PM0543"/>
<dbReference type="HOGENOM" id="CLU_029499_14_1_6"/>
<dbReference type="UniPathway" id="UPA00164"/>
<dbReference type="Proteomes" id="UP000000809">
    <property type="component" value="Chromosome"/>
</dbReference>
<dbReference type="GO" id="GO:0005524">
    <property type="term" value="F:ATP binding"/>
    <property type="evidence" value="ECO:0007669"/>
    <property type="project" value="UniProtKB-KW"/>
</dbReference>
<dbReference type="GO" id="GO:0008878">
    <property type="term" value="F:glucose-1-phosphate adenylyltransferase activity"/>
    <property type="evidence" value="ECO:0007669"/>
    <property type="project" value="UniProtKB-UniRule"/>
</dbReference>
<dbReference type="GO" id="GO:0005978">
    <property type="term" value="P:glycogen biosynthetic process"/>
    <property type="evidence" value="ECO:0007669"/>
    <property type="project" value="UniProtKB-UniRule"/>
</dbReference>
<dbReference type="CDD" id="cd02508">
    <property type="entry name" value="ADP_Glucose_PP"/>
    <property type="match status" value="1"/>
</dbReference>
<dbReference type="CDD" id="cd04651">
    <property type="entry name" value="LbH_G1P_AT_C"/>
    <property type="match status" value="1"/>
</dbReference>
<dbReference type="Gene3D" id="2.160.10.10">
    <property type="entry name" value="Hexapeptide repeat proteins"/>
    <property type="match status" value="1"/>
</dbReference>
<dbReference type="Gene3D" id="3.90.550.10">
    <property type="entry name" value="Spore Coat Polysaccharide Biosynthesis Protein SpsA, Chain A"/>
    <property type="match status" value="1"/>
</dbReference>
<dbReference type="HAMAP" id="MF_00624">
    <property type="entry name" value="GlgC"/>
    <property type="match status" value="1"/>
</dbReference>
<dbReference type="InterPro" id="IPR011831">
    <property type="entry name" value="ADP-Glc_PPase"/>
</dbReference>
<dbReference type="InterPro" id="IPR005836">
    <property type="entry name" value="ADP_Glu_pyroP_CS"/>
</dbReference>
<dbReference type="InterPro" id="IPR023049">
    <property type="entry name" value="GlgC_bac"/>
</dbReference>
<dbReference type="InterPro" id="IPR056818">
    <property type="entry name" value="GlmU/GlgC-like_hexapep"/>
</dbReference>
<dbReference type="InterPro" id="IPR005835">
    <property type="entry name" value="NTP_transferase_dom"/>
</dbReference>
<dbReference type="InterPro" id="IPR029044">
    <property type="entry name" value="Nucleotide-diphossugar_trans"/>
</dbReference>
<dbReference type="InterPro" id="IPR011004">
    <property type="entry name" value="Trimer_LpxA-like_sf"/>
</dbReference>
<dbReference type="NCBIfam" id="TIGR02091">
    <property type="entry name" value="glgC"/>
    <property type="match status" value="1"/>
</dbReference>
<dbReference type="NCBIfam" id="NF001947">
    <property type="entry name" value="PRK00725.1"/>
    <property type="match status" value="1"/>
</dbReference>
<dbReference type="NCBIfam" id="NF002023">
    <property type="entry name" value="PRK00844.1"/>
    <property type="match status" value="1"/>
</dbReference>
<dbReference type="PANTHER" id="PTHR43523:SF2">
    <property type="entry name" value="GLUCOSE-1-PHOSPHATE ADENYLYLTRANSFERASE"/>
    <property type="match status" value="1"/>
</dbReference>
<dbReference type="PANTHER" id="PTHR43523">
    <property type="entry name" value="GLUCOSE-1-PHOSPHATE ADENYLYLTRANSFERASE-RELATED"/>
    <property type="match status" value="1"/>
</dbReference>
<dbReference type="Pfam" id="PF24894">
    <property type="entry name" value="Hexapep_GlmU"/>
    <property type="match status" value="1"/>
</dbReference>
<dbReference type="Pfam" id="PF00483">
    <property type="entry name" value="NTP_transferase"/>
    <property type="match status" value="1"/>
</dbReference>
<dbReference type="SUPFAM" id="SSF53448">
    <property type="entry name" value="Nucleotide-diphospho-sugar transferases"/>
    <property type="match status" value="1"/>
</dbReference>
<dbReference type="SUPFAM" id="SSF51161">
    <property type="entry name" value="Trimeric LpxA-like enzymes"/>
    <property type="match status" value="1"/>
</dbReference>
<dbReference type="PROSITE" id="PS00808">
    <property type="entry name" value="ADP_GLC_PYROPHOSPH_1"/>
    <property type="match status" value="1"/>
</dbReference>
<dbReference type="PROSITE" id="PS00809">
    <property type="entry name" value="ADP_GLC_PYROPHOSPH_2"/>
    <property type="match status" value="1"/>
</dbReference>
<dbReference type="PROSITE" id="PS00810">
    <property type="entry name" value="ADP_GLC_PYROPHOSPH_3"/>
    <property type="match status" value="1"/>
</dbReference>